<comment type="function">
    <text evidence="1">Involved in cholesterol degradation. Catalyzes the retro-aldol cleavage of 4-hydroxy-2-oxohexanoate (HOHA) to pyruvate and propanal. Can also catalyze the cleavage of 4-hydroxy-2-oxopentanoate (HOPA) to pyruvate and acetaldehyde. The aldehydes produced by this reaction are directly channeled to the dehydrogenase HsaG.</text>
</comment>
<comment type="catalytic activity">
    <reaction evidence="1">
        <text>(S)-4-hydroxy-2-oxohexanoate = propanal + pyruvate</text>
        <dbReference type="Rhea" id="RHEA:36003"/>
        <dbReference type="ChEBI" id="CHEBI:15361"/>
        <dbReference type="ChEBI" id="CHEBI:17153"/>
        <dbReference type="ChEBI" id="CHEBI:73142"/>
        <dbReference type="EC" id="4.1.3.43"/>
    </reaction>
    <physiologicalReaction direction="left-to-right" evidence="1">
        <dbReference type="Rhea" id="RHEA:36004"/>
    </physiologicalReaction>
</comment>
<comment type="catalytic activity">
    <reaction evidence="2">
        <text>(S)-4-hydroxy-2-oxopentanoate = acetaldehyde + pyruvate</text>
        <dbReference type="Rhea" id="RHEA:22624"/>
        <dbReference type="ChEBI" id="CHEBI:15343"/>
        <dbReference type="ChEBI" id="CHEBI:15361"/>
        <dbReference type="ChEBI" id="CHEBI:73143"/>
        <dbReference type="EC" id="4.1.3.39"/>
    </reaction>
    <physiologicalReaction direction="left-to-right" evidence="1">
        <dbReference type="Rhea" id="RHEA:22625"/>
    </physiologicalReaction>
</comment>
<comment type="cofactor">
    <cofactor evidence="1">
        <name>Mn(2+)</name>
        <dbReference type="ChEBI" id="CHEBI:29035"/>
    </cofactor>
</comment>
<comment type="subunit">
    <text evidence="1">Homodimer. Forms a heterotetramer composed of two aldolase (HsaF) and two dehydrogenase (HsaG) subunits.</text>
</comment>
<comment type="similarity">
    <text evidence="2">Belongs to the 4-hydroxy-2-oxovalerate aldolase family.</text>
</comment>
<evidence type="ECO:0000250" key="1">
    <source>
        <dbReference type="UniProtKB" id="P9WMK5"/>
    </source>
</evidence>
<evidence type="ECO:0000255" key="2">
    <source>
        <dbReference type="HAMAP-Rule" id="MF_01656"/>
    </source>
</evidence>
<sequence length="346" mass="36442">MTDMWDVRITDTSLRDGSHHKRHQFTKDEVGAIVAALDAAGVPVIEVTHGDGLGGSSFNYGFSKTPEQELIKLAAATAKEARIAFLMLPGVGTKDDIKEARDNGGSICRIATHCTEADVSIQHFGLARELGLETVGFLMMAHTIAPEKLAAQARIMADAGCQCVYVVDSAGALVLDGVADRVSALVAELGEDAQVGFHGHENLGLGVANSVAAVRAGAKQIDGSCRRFGAGAGNAPVEALIGVFDKIGVKTGIDFFDIADAAEDVVRPAMPAECLLDRNALIMGYSGVYSSFLKHAVRQAERYGVPASALLHRAGQRKLIGGQEDQLIDIALEIKRELDSGAAVTH</sequence>
<protein>
    <recommendedName>
        <fullName evidence="1">4-hydroxy-2-oxohexanoate aldolase</fullName>
        <ecNumber evidence="1">4.1.3.43</ecNumber>
    </recommendedName>
    <alternativeName>
        <fullName evidence="2">4-hydroxy-2-keto-pentanoic acid aldolase</fullName>
    </alternativeName>
    <alternativeName>
        <fullName evidence="2">4-hydroxy-2-oxopentanoate aldolase</fullName>
    </alternativeName>
    <alternativeName>
        <fullName evidence="2">4-hydroxy-2-oxovalerate aldolase</fullName>
        <shortName evidence="2">HOA</shortName>
        <ecNumber evidence="2">4.1.3.39</ecNumber>
    </alternativeName>
</protein>
<dbReference type="EC" id="4.1.3.43" evidence="1"/>
<dbReference type="EC" id="4.1.3.39" evidence="2"/>
<dbReference type="EMBL" id="AM408590">
    <property type="protein sequence ID" value="CAL73587.1"/>
    <property type="molecule type" value="Genomic_DNA"/>
</dbReference>
<dbReference type="SMR" id="A1KPL9"/>
<dbReference type="KEGG" id="mbb:BCG_3598c"/>
<dbReference type="HOGENOM" id="CLU_049173_0_0_11"/>
<dbReference type="Proteomes" id="UP000001472">
    <property type="component" value="Chromosome"/>
</dbReference>
<dbReference type="GO" id="GO:0003852">
    <property type="term" value="F:2-isopropylmalate synthase activity"/>
    <property type="evidence" value="ECO:0007669"/>
    <property type="project" value="TreeGrafter"/>
</dbReference>
<dbReference type="GO" id="GO:0008701">
    <property type="term" value="F:4-hydroxy-2-oxovalerate aldolase activity"/>
    <property type="evidence" value="ECO:0007669"/>
    <property type="project" value="UniProtKB-UniRule"/>
</dbReference>
<dbReference type="GO" id="GO:0030145">
    <property type="term" value="F:manganese ion binding"/>
    <property type="evidence" value="ECO:0007669"/>
    <property type="project" value="UniProtKB-UniRule"/>
</dbReference>
<dbReference type="GO" id="GO:0009056">
    <property type="term" value="P:catabolic process"/>
    <property type="evidence" value="ECO:0007669"/>
    <property type="project" value="UniProtKB-KW"/>
</dbReference>
<dbReference type="GO" id="GO:0009098">
    <property type="term" value="P:L-leucine biosynthetic process"/>
    <property type="evidence" value="ECO:0007669"/>
    <property type="project" value="TreeGrafter"/>
</dbReference>
<dbReference type="CDD" id="cd07943">
    <property type="entry name" value="DRE_TIM_HOA"/>
    <property type="match status" value="1"/>
</dbReference>
<dbReference type="FunFam" id="1.10.8.60:FF:000042">
    <property type="entry name" value="4-hydroxy-2-oxovalerate aldolase"/>
    <property type="match status" value="1"/>
</dbReference>
<dbReference type="FunFam" id="3.20.20.70:FF:000072">
    <property type="entry name" value="4-hydroxy-2-oxovalerate aldolase"/>
    <property type="match status" value="1"/>
</dbReference>
<dbReference type="Gene3D" id="1.10.8.60">
    <property type="match status" value="1"/>
</dbReference>
<dbReference type="Gene3D" id="3.20.20.70">
    <property type="entry name" value="Aldolase class I"/>
    <property type="match status" value="1"/>
</dbReference>
<dbReference type="HAMAP" id="MF_01656">
    <property type="entry name" value="HOA"/>
    <property type="match status" value="1"/>
</dbReference>
<dbReference type="InterPro" id="IPR050073">
    <property type="entry name" value="2-IPM_HCS-like"/>
</dbReference>
<dbReference type="InterPro" id="IPR017629">
    <property type="entry name" value="4OH_2_O-val_aldolase"/>
</dbReference>
<dbReference type="InterPro" id="IPR013785">
    <property type="entry name" value="Aldolase_TIM"/>
</dbReference>
<dbReference type="InterPro" id="IPR012425">
    <property type="entry name" value="DmpG_comm"/>
</dbReference>
<dbReference type="InterPro" id="IPR035685">
    <property type="entry name" value="DRE_TIM_HOA"/>
</dbReference>
<dbReference type="InterPro" id="IPR000891">
    <property type="entry name" value="PYR_CT"/>
</dbReference>
<dbReference type="NCBIfam" id="TIGR03217">
    <property type="entry name" value="4OH_2_O_val_ald"/>
    <property type="match status" value="1"/>
</dbReference>
<dbReference type="NCBIfam" id="NF006049">
    <property type="entry name" value="PRK08195.1"/>
    <property type="match status" value="1"/>
</dbReference>
<dbReference type="PANTHER" id="PTHR10277:SF9">
    <property type="entry name" value="2-ISOPROPYLMALATE SYNTHASE 1, CHLOROPLASTIC-RELATED"/>
    <property type="match status" value="1"/>
</dbReference>
<dbReference type="PANTHER" id="PTHR10277">
    <property type="entry name" value="HOMOCITRATE SYNTHASE-RELATED"/>
    <property type="match status" value="1"/>
</dbReference>
<dbReference type="Pfam" id="PF07836">
    <property type="entry name" value="DmpG_comm"/>
    <property type="match status" value="1"/>
</dbReference>
<dbReference type="Pfam" id="PF00682">
    <property type="entry name" value="HMGL-like"/>
    <property type="match status" value="1"/>
</dbReference>
<dbReference type="SUPFAM" id="SSF51569">
    <property type="entry name" value="Aldolase"/>
    <property type="match status" value="1"/>
</dbReference>
<dbReference type="SUPFAM" id="SSF89000">
    <property type="entry name" value="post-HMGL domain-like"/>
    <property type="match status" value="1"/>
</dbReference>
<dbReference type="PROSITE" id="PS50991">
    <property type="entry name" value="PYR_CT"/>
    <property type="match status" value="1"/>
</dbReference>
<accession>A1KPL9</accession>
<reference key="1">
    <citation type="journal article" date="2007" name="Proc. Natl. Acad. Sci. U.S.A.">
        <title>Genome plasticity of BCG and impact on vaccine efficacy.</title>
        <authorList>
            <person name="Brosch R."/>
            <person name="Gordon S.V."/>
            <person name="Garnier T."/>
            <person name="Eiglmeier K."/>
            <person name="Frigui W."/>
            <person name="Valenti P."/>
            <person name="Dos Santos S."/>
            <person name="Duthoy S."/>
            <person name="Lacroix C."/>
            <person name="Garcia-Pelayo C."/>
            <person name="Inwald J.K."/>
            <person name="Golby P."/>
            <person name="Garcia J.N."/>
            <person name="Hewinson R.G."/>
            <person name="Behr M.A."/>
            <person name="Quail M.A."/>
            <person name="Churcher C."/>
            <person name="Barrell B.G."/>
            <person name="Parkhill J."/>
            <person name="Cole S.T."/>
        </authorList>
    </citation>
    <scope>NUCLEOTIDE SEQUENCE [LARGE SCALE GENOMIC DNA]</scope>
    <source>
        <strain>BCG / Pasteur 1173P2</strain>
    </source>
</reference>
<keyword id="KW-0058">Aromatic hydrocarbons catabolism</keyword>
<keyword id="KW-0456">Lyase</keyword>
<keyword id="KW-0464">Manganese</keyword>
<keyword id="KW-0479">Metal-binding</keyword>
<feature type="chain" id="PRO_0000387848" description="4-hydroxy-2-oxohexanoate aldolase">
    <location>
        <begin position="1"/>
        <end position="346"/>
    </location>
</feature>
<feature type="domain" description="Pyruvate carboxyltransferase" evidence="2">
    <location>
        <begin position="7"/>
        <end position="259"/>
    </location>
</feature>
<feature type="active site" description="Proton acceptor" evidence="2">
    <location>
        <position position="19"/>
    </location>
</feature>
<feature type="binding site" evidence="2">
    <location>
        <begin position="15"/>
        <end position="16"/>
    </location>
    <ligand>
        <name>substrate</name>
    </ligand>
</feature>
<feature type="binding site" evidence="2">
    <location>
        <position position="16"/>
    </location>
    <ligand>
        <name>Mn(2+)</name>
        <dbReference type="ChEBI" id="CHEBI:29035"/>
    </ligand>
</feature>
<feature type="binding site" evidence="2">
    <location>
        <position position="169"/>
    </location>
    <ligand>
        <name>substrate</name>
    </ligand>
</feature>
<feature type="binding site" evidence="2">
    <location>
        <position position="198"/>
    </location>
    <ligand>
        <name>Mn(2+)</name>
        <dbReference type="ChEBI" id="CHEBI:29035"/>
    </ligand>
</feature>
<feature type="binding site" evidence="2">
    <location>
        <position position="198"/>
    </location>
    <ligand>
        <name>substrate</name>
    </ligand>
</feature>
<feature type="binding site" evidence="2">
    <location>
        <position position="200"/>
    </location>
    <ligand>
        <name>Mn(2+)</name>
        <dbReference type="ChEBI" id="CHEBI:29035"/>
    </ligand>
</feature>
<feature type="binding site" evidence="2">
    <location>
        <position position="289"/>
    </location>
    <ligand>
        <name>substrate</name>
    </ligand>
</feature>
<feature type="site" description="Transition state stabilizer" evidence="2">
    <location>
        <position position="15"/>
    </location>
</feature>
<proteinExistence type="inferred from homology"/>
<name>HOA_MYCBP</name>
<gene>
    <name evidence="1" type="primary">hsaF</name>
    <name type="ordered locus">BCG_3598c</name>
</gene>
<organism>
    <name type="scientific">Mycobacterium bovis (strain BCG / Pasteur 1173P2)</name>
    <dbReference type="NCBI Taxonomy" id="410289"/>
    <lineage>
        <taxon>Bacteria</taxon>
        <taxon>Bacillati</taxon>
        <taxon>Actinomycetota</taxon>
        <taxon>Actinomycetes</taxon>
        <taxon>Mycobacteriales</taxon>
        <taxon>Mycobacteriaceae</taxon>
        <taxon>Mycobacterium</taxon>
        <taxon>Mycobacterium tuberculosis complex</taxon>
    </lineage>
</organism>